<keyword id="KW-0256">Endoplasmic reticulum</keyword>
<keyword id="KW-0931">ER-Golgi transport</keyword>
<keyword id="KW-0333">Golgi apparatus</keyword>
<keyword id="KW-1185">Reference proteome</keyword>
<keyword id="KW-0813">Transport</keyword>
<gene>
    <name type="primary">trappc3</name>
    <name type="ORF">DDB_G0277135</name>
</gene>
<organism>
    <name type="scientific">Dictyostelium discoideum</name>
    <name type="common">Social amoeba</name>
    <dbReference type="NCBI Taxonomy" id="44689"/>
    <lineage>
        <taxon>Eukaryota</taxon>
        <taxon>Amoebozoa</taxon>
        <taxon>Evosea</taxon>
        <taxon>Eumycetozoa</taxon>
        <taxon>Dictyostelia</taxon>
        <taxon>Dictyosteliales</taxon>
        <taxon>Dictyosteliaceae</taxon>
        <taxon>Dictyostelium</taxon>
    </lineage>
</organism>
<feature type="chain" id="PRO_0000330747" description="Trafficking protein particle complex subunit 3">
    <location>
        <begin position="1"/>
        <end position="186"/>
    </location>
</feature>
<dbReference type="EMBL" id="AAFI02000019">
    <property type="protein sequence ID" value="EAL68879.3"/>
    <property type="status" value="ALT_SEQ"/>
    <property type="molecule type" value="Genomic_DNA"/>
</dbReference>
<dbReference type="RefSeq" id="XP_642804.3">
    <property type="nucleotide sequence ID" value="XM_637712.3"/>
</dbReference>
<dbReference type="SMR" id="Q86K94"/>
<dbReference type="FunCoup" id="Q86K94">
    <property type="interactions" value="1129"/>
</dbReference>
<dbReference type="STRING" id="44689.Q86K94"/>
<dbReference type="PaxDb" id="44689-DDB0252667"/>
<dbReference type="EnsemblProtists" id="EAL68879">
    <property type="protein sequence ID" value="EAL68879"/>
    <property type="gene ID" value="DDB_G0277135"/>
</dbReference>
<dbReference type="GeneID" id="8620867"/>
<dbReference type="KEGG" id="ddi:DDB_G0277135"/>
<dbReference type="dictyBase" id="DDB_G0277135">
    <property type="gene designation" value="trappc3"/>
</dbReference>
<dbReference type="VEuPathDB" id="AmoebaDB:DDB_G0277135"/>
<dbReference type="eggNOG" id="KOG3330">
    <property type="taxonomic scope" value="Eukaryota"/>
</dbReference>
<dbReference type="HOGENOM" id="CLU_087110_0_0_1"/>
<dbReference type="InParanoid" id="Q86K94"/>
<dbReference type="OMA" id="MVQMQVQ"/>
<dbReference type="PhylomeDB" id="Q86K94"/>
<dbReference type="Reactome" id="R-DDI-204005">
    <property type="pathway name" value="COPII-mediated vesicle transport"/>
</dbReference>
<dbReference type="Reactome" id="R-DDI-8876198">
    <property type="pathway name" value="RAB GEFs exchange GTP for GDP on RABs"/>
</dbReference>
<dbReference type="PRO" id="PR:Q86K94"/>
<dbReference type="Proteomes" id="UP000002195">
    <property type="component" value="Chromosome 2"/>
</dbReference>
<dbReference type="GO" id="GO:0033106">
    <property type="term" value="C:cis-Golgi network membrane"/>
    <property type="evidence" value="ECO:0000318"/>
    <property type="project" value="GO_Central"/>
</dbReference>
<dbReference type="GO" id="GO:0005829">
    <property type="term" value="C:cytosol"/>
    <property type="evidence" value="ECO:0000318"/>
    <property type="project" value="GO_Central"/>
</dbReference>
<dbReference type="GO" id="GO:0005783">
    <property type="term" value="C:endoplasmic reticulum"/>
    <property type="evidence" value="ECO:0007669"/>
    <property type="project" value="UniProtKB-SubCell"/>
</dbReference>
<dbReference type="GO" id="GO:0030008">
    <property type="term" value="C:TRAPP complex"/>
    <property type="evidence" value="ECO:0000318"/>
    <property type="project" value="GO_Central"/>
</dbReference>
<dbReference type="GO" id="GO:0006888">
    <property type="term" value="P:endoplasmic reticulum to Golgi vesicle-mediated transport"/>
    <property type="evidence" value="ECO:0000250"/>
    <property type="project" value="dictyBase"/>
</dbReference>
<dbReference type="GO" id="GO:0006891">
    <property type="term" value="P:intra-Golgi vesicle-mediated transport"/>
    <property type="evidence" value="ECO:0000318"/>
    <property type="project" value="GO_Central"/>
</dbReference>
<dbReference type="CDD" id="cd14942">
    <property type="entry name" value="TRAPPC3_bet3"/>
    <property type="match status" value="1"/>
</dbReference>
<dbReference type="FunFam" id="3.30.1380.20:FF:000001">
    <property type="entry name" value="Trafficking protein particle complex subunit BET3"/>
    <property type="match status" value="1"/>
</dbReference>
<dbReference type="Gene3D" id="3.30.1380.20">
    <property type="entry name" value="Trafficking protein particle complex subunit 3"/>
    <property type="match status" value="1"/>
</dbReference>
<dbReference type="InterPro" id="IPR016721">
    <property type="entry name" value="Bet3"/>
</dbReference>
<dbReference type="InterPro" id="IPR024096">
    <property type="entry name" value="NO_sig/Golgi_transp_ligand-bd"/>
</dbReference>
<dbReference type="InterPro" id="IPR007194">
    <property type="entry name" value="TRAPP_component"/>
</dbReference>
<dbReference type="PANTHER" id="PTHR13048">
    <property type="entry name" value="TRAFFICKING PROTEIN PARTICLE COMPLEX SUBUNIT 3"/>
    <property type="match status" value="1"/>
</dbReference>
<dbReference type="Pfam" id="PF04051">
    <property type="entry name" value="TRAPP"/>
    <property type="match status" value="1"/>
</dbReference>
<dbReference type="PIRSF" id="PIRSF018293">
    <property type="entry name" value="TRAPP_I_complex_Bet3"/>
    <property type="match status" value="1"/>
</dbReference>
<dbReference type="SUPFAM" id="SSF111126">
    <property type="entry name" value="Ligand-binding domain in the NO signalling and Golgi transport"/>
    <property type="match status" value="1"/>
</dbReference>
<accession>Q86K94</accession>
<accession>Q550D8</accession>
<evidence type="ECO:0000250" key="1"/>
<evidence type="ECO:0000305" key="2"/>
<name>TPPC3_DICDI</name>
<proteinExistence type="inferred from homology"/>
<comment type="function">
    <text evidence="1">May play a role in vesicular transport from endoplasmic reticulum to Golgi.</text>
</comment>
<comment type="subunit">
    <text evidence="1">Homodimer. Part of the multisubunit TRAPP (transport protein particle) complex (By similarity).</text>
</comment>
<comment type="subcellular location">
    <subcellularLocation>
        <location evidence="1">Golgi apparatus</location>
        <location evidence="1">cis-Golgi network</location>
    </subcellularLocation>
    <subcellularLocation>
        <location evidence="1">Endoplasmic reticulum</location>
    </subcellularLocation>
</comment>
<comment type="similarity">
    <text evidence="2">Belongs to the TRAPP small subunits family. BET3 subfamily.</text>
</comment>
<reference key="1">
    <citation type="journal article" date="2002" name="Nature">
        <title>Sequence and analysis of chromosome 2 of Dictyostelium discoideum.</title>
        <authorList>
            <person name="Gloeckner G."/>
            <person name="Eichinger L."/>
            <person name="Szafranski K."/>
            <person name="Pachebat J.A."/>
            <person name="Bankier A.T."/>
            <person name="Dear P.H."/>
            <person name="Lehmann R."/>
            <person name="Baumgart C."/>
            <person name="Parra G."/>
            <person name="Abril J.F."/>
            <person name="Guigo R."/>
            <person name="Kumpf K."/>
            <person name="Tunggal B."/>
            <person name="Cox E.C."/>
            <person name="Quail M.A."/>
            <person name="Platzer M."/>
            <person name="Rosenthal A."/>
            <person name="Noegel A.A."/>
        </authorList>
    </citation>
    <scope>NUCLEOTIDE SEQUENCE [LARGE SCALE GENOMIC DNA]</scope>
    <source>
        <strain>AX4</strain>
    </source>
</reference>
<reference key="2">
    <citation type="journal article" date="2005" name="Nature">
        <title>The genome of the social amoeba Dictyostelium discoideum.</title>
        <authorList>
            <person name="Eichinger L."/>
            <person name="Pachebat J.A."/>
            <person name="Gloeckner G."/>
            <person name="Rajandream M.A."/>
            <person name="Sucgang R."/>
            <person name="Berriman M."/>
            <person name="Song J."/>
            <person name="Olsen R."/>
            <person name="Szafranski K."/>
            <person name="Xu Q."/>
            <person name="Tunggal B."/>
            <person name="Kummerfeld S."/>
            <person name="Madera M."/>
            <person name="Konfortov B.A."/>
            <person name="Rivero F."/>
            <person name="Bankier A.T."/>
            <person name="Lehmann R."/>
            <person name="Hamlin N."/>
            <person name="Davies R."/>
            <person name="Gaudet P."/>
            <person name="Fey P."/>
            <person name="Pilcher K."/>
            <person name="Chen G."/>
            <person name="Saunders D."/>
            <person name="Sodergren E.J."/>
            <person name="Davis P."/>
            <person name="Kerhornou A."/>
            <person name="Nie X."/>
            <person name="Hall N."/>
            <person name="Anjard C."/>
            <person name="Hemphill L."/>
            <person name="Bason N."/>
            <person name="Farbrother P."/>
            <person name="Desany B."/>
            <person name="Just E."/>
            <person name="Morio T."/>
            <person name="Rost R."/>
            <person name="Churcher C.M."/>
            <person name="Cooper J."/>
            <person name="Haydock S."/>
            <person name="van Driessche N."/>
            <person name="Cronin A."/>
            <person name="Goodhead I."/>
            <person name="Muzny D.M."/>
            <person name="Mourier T."/>
            <person name="Pain A."/>
            <person name="Lu M."/>
            <person name="Harper D."/>
            <person name="Lindsay R."/>
            <person name="Hauser H."/>
            <person name="James K.D."/>
            <person name="Quiles M."/>
            <person name="Madan Babu M."/>
            <person name="Saito T."/>
            <person name="Buchrieser C."/>
            <person name="Wardroper A."/>
            <person name="Felder M."/>
            <person name="Thangavelu M."/>
            <person name="Johnson D."/>
            <person name="Knights A."/>
            <person name="Loulseged H."/>
            <person name="Mungall K.L."/>
            <person name="Oliver K."/>
            <person name="Price C."/>
            <person name="Quail M.A."/>
            <person name="Urushihara H."/>
            <person name="Hernandez J."/>
            <person name="Rabbinowitsch E."/>
            <person name="Steffen D."/>
            <person name="Sanders M."/>
            <person name="Ma J."/>
            <person name="Kohara Y."/>
            <person name="Sharp S."/>
            <person name="Simmonds M.N."/>
            <person name="Spiegler S."/>
            <person name="Tivey A."/>
            <person name="Sugano S."/>
            <person name="White B."/>
            <person name="Walker D."/>
            <person name="Woodward J.R."/>
            <person name="Winckler T."/>
            <person name="Tanaka Y."/>
            <person name="Shaulsky G."/>
            <person name="Schleicher M."/>
            <person name="Weinstock G.M."/>
            <person name="Rosenthal A."/>
            <person name="Cox E.C."/>
            <person name="Chisholm R.L."/>
            <person name="Gibbs R.A."/>
            <person name="Loomis W.F."/>
            <person name="Platzer M."/>
            <person name="Kay R.R."/>
            <person name="Williams J.G."/>
            <person name="Dear P.H."/>
            <person name="Noegel A.A."/>
            <person name="Barrell B.G."/>
            <person name="Kuspa A."/>
        </authorList>
    </citation>
    <scope>NUCLEOTIDE SEQUENCE [LARGE SCALE GENOMIC DNA]</scope>
    <source>
        <strain>AX4</strain>
    </source>
</reference>
<sequence length="186" mass="21211">MSKKYDKLGNDVFNKVEKINSELFTLTYGALVTQLIKDYEDIEQVNIKLEQMGYNIGIRLIEEFLAKSGIGRCSDFIETAEVIAKVGFKMFLGVNAHVGDWDANRKEFHLTIEDNPLIDFVELPDQYKHKLYYSNILCGVMRGALEMVQMKVKCTFVKCTLSDDSTSEIKVVLEEVLSDMIPVGYD</sequence>
<protein>
    <recommendedName>
        <fullName>Trafficking protein particle complex subunit 3</fullName>
    </recommendedName>
</protein>